<accession>Q4JVI9</accession>
<gene>
    <name type="ordered locus">jk1004</name>
</gene>
<evidence type="ECO:0000255" key="1">
    <source>
        <dbReference type="HAMAP-Rule" id="MF_00636"/>
    </source>
</evidence>
<name>Y1004_CORJK</name>
<sequence>MSASTQQEPSLILITGMSGAGRRATAAALEELGWYVADNLPPELIVRMVELSFSDDSPIEKLAIVTDVRSRDFAGNLTSVLHDLHTGGRRPTVLYLDATDEALIARFDAVRRTHPLQQKGTLQDGIDREREMLTSIRERADIVLDTTNRSIHDLRRELEKFFAAADHSSVRINVQSFGFKHGPPKDIDMLLDARFLPNPYWDPELRPFKGIDAPVSDFVLSQPGAQAFLDHIVGLIHSVLPGYRKEGKFFVSVAIGCTGGHHRSVAIVEELTRRLADDGVLVNLSHRDLER</sequence>
<dbReference type="EMBL" id="CR931997">
    <property type="protein sequence ID" value="CAI37168.1"/>
    <property type="molecule type" value="Genomic_DNA"/>
</dbReference>
<dbReference type="RefSeq" id="WP_011273576.1">
    <property type="nucleotide sequence ID" value="NC_007164.1"/>
</dbReference>
<dbReference type="SMR" id="Q4JVI9"/>
<dbReference type="STRING" id="306537.jk1004"/>
<dbReference type="KEGG" id="cjk:jk1004"/>
<dbReference type="PATRIC" id="fig|306537.10.peg.1016"/>
<dbReference type="eggNOG" id="COG1660">
    <property type="taxonomic scope" value="Bacteria"/>
</dbReference>
<dbReference type="HOGENOM" id="CLU_059558_0_0_11"/>
<dbReference type="OrthoDB" id="9784461at2"/>
<dbReference type="Proteomes" id="UP000000545">
    <property type="component" value="Chromosome"/>
</dbReference>
<dbReference type="GO" id="GO:0005524">
    <property type="term" value="F:ATP binding"/>
    <property type="evidence" value="ECO:0007669"/>
    <property type="project" value="UniProtKB-UniRule"/>
</dbReference>
<dbReference type="GO" id="GO:0005525">
    <property type="term" value="F:GTP binding"/>
    <property type="evidence" value="ECO:0007669"/>
    <property type="project" value="UniProtKB-UniRule"/>
</dbReference>
<dbReference type="HAMAP" id="MF_00636">
    <property type="entry name" value="RapZ_like"/>
    <property type="match status" value="1"/>
</dbReference>
<dbReference type="InterPro" id="IPR027417">
    <property type="entry name" value="P-loop_NTPase"/>
</dbReference>
<dbReference type="InterPro" id="IPR005337">
    <property type="entry name" value="RapZ-like"/>
</dbReference>
<dbReference type="InterPro" id="IPR053930">
    <property type="entry name" value="RapZ-like_N"/>
</dbReference>
<dbReference type="InterPro" id="IPR053931">
    <property type="entry name" value="RapZ_C"/>
</dbReference>
<dbReference type="NCBIfam" id="NF003828">
    <property type="entry name" value="PRK05416.1"/>
    <property type="match status" value="1"/>
</dbReference>
<dbReference type="PANTHER" id="PTHR30448">
    <property type="entry name" value="RNASE ADAPTER PROTEIN RAPZ"/>
    <property type="match status" value="1"/>
</dbReference>
<dbReference type="PANTHER" id="PTHR30448:SF0">
    <property type="entry name" value="RNASE ADAPTER PROTEIN RAPZ"/>
    <property type="match status" value="1"/>
</dbReference>
<dbReference type="Pfam" id="PF22740">
    <property type="entry name" value="PapZ_C"/>
    <property type="match status" value="1"/>
</dbReference>
<dbReference type="Pfam" id="PF03668">
    <property type="entry name" value="RapZ-like_N"/>
    <property type="match status" value="1"/>
</dbReference>
<dbReference type="PIRSF" id="PIRSF005052">
    <property type="entry name" value="P-loopkin"/>
    <property type="match status" value="1"/>
</dbReference>
<dbReference type="SUPFAM" id="SSF52540">
    <property type="entry name" value="P-loop containing nucleoside triphosphate hydrolases"/>
    <property type="match status" value="1"/>
</dbReference>
<organism>
    <name type="scientific">Corynebacterium jeikeium (strain K411)</name>
    <dbReference type="NCBI Taxonomy" id="306537"/>
    <lineage>
        <taxon>Bacteria</taxon>
        <taxon>Bacillati</taxon>
        <taxon>Actinomycetota</taxon>
        <taxon>Actinomycetes</taxon>
        <taxon>Mycobacteriales</taxon>
        <taxon>Corynebacteriaceae</taxon>
        <taxon>Corynebacterium</taxon>
    </lineage>
</organism>
<proteinExistence type="inferred from homology"/>
<keyword id="KW-0067">ATP-binding</keyword>
<keyword id="KW-0342">GTP-binding</keyword>
<keyword id="KW-0547">Nucleotide-binding</keyword>
<keyword id="KW-1185">Reference proteome</keyword>
<comment type="function">
    <text evidence="1">Displays ATPase and GTPase activities.</text>
</comment>
<comment type="similarity">
    <text evidence="1">Belongs to the RapZ-like family.</text>
</comment>
<reference key="1">
    <citation type="journal article" date="2005" name="J. Bacteriol.">
        <title>Complete genome sequence and analysis of the multiresistant nosocomial pathogen Corynebacterium jeikeium K411, a lipid-requiring bacterium of the human skin flora.</title>
        <authorList>
            <person name="Tauch A."/>
            <person name="Kaiser O."/>
            <person name="Hain T."/>
            <person name="Goesmann A."/>
            <person name="Weisshaar B."/>
            <person name="Albersmeier A."/>
            <person name="Bekel T."/>
            <person name="Bischoff N."/>
            <person name="Brune I."/>
            <person name="Chakraborty T."/>
            <person name="Kalinowski J."/>
            <person name="Meyer F."/>
            <person name="Rupp O."/>
            <person name="Schneiker S."/>
            <person name="Viehoever P."/>
            <person name="Puehler A."/>
        </authorList>
    </citation>
    <scope>NUCLEOTIDE SEQUENCE [LARGE SCALE GENOMIC DNA]</scope>
    <source>
        <strain>K411</strain>
    </source>
</reference>
<protein>
    <recommendedName>
        <fullName evidence="1">Nucleotide-binding protein jk1004</fullName>
    </recommendedName>
</protein>
<feature type="chain" id="PRO_0000258957" description="Nucleotide-binding protein jk1004">
    <location>
        <begin position="1"/>
        <end position="291"/>
    </location>
</feature>
<feature type="binding site" evidence="1">
    <location>
        <begin position="16"/>
        <end position="23"/>
    </location>
    <ligand>
        <name>ATP</name>
        <dbReference type="ChEBI" id="CHEBI:30616"/>
    </ligand>
</feature>
<feature type="binding site" evidence="1">
    <location>
        <begin position="67"/>
        <end position="70"/>
    </location>
    <ligand>
        <name>GTP</name>
        <dbReference type="ChEBI" id="CHEBI:37565"/>
    </ligand>
</feature>